<comment type="function">
    <text evidence="1">Catalyzes the hydrolysis of N-succinyl-L,L-diaminopimelic acid (SDAP), forming succinate and LL-2,6-diaminopimelate (DAP), an intermediate involved in the bacterial biosynthesis of lysine and meso-diaminopimelic acid, an essential component of bacterial cell walls.</text>
</comment>
<comment type="catalytic activity">
    <reaction evidence="1">
        <text>N-succinyl-(2S,6S)-2,6-diaminopimelate + H2O = (2S,6S)-2,6-diaminopimelate + succinate</text>
        <dbReference type="Rhea" id="RHEA:22608"/>
        <dbReference type="ChEBI" id="CHEBI:15377"/>
        <dbReference type="ChEBI" id="CHEBI:30031"/>
        <dbReference type="ChEBI" id="CHEBI:57609"/>
        <dbReference type="ChEBI" id="CHEBI:58087"/>
        <dbReference type="EC" id="3.5.1.18"/>
    </reaction>
</comment>
<comment type="cofactor">
    <cofactor evidence="1">
        <name>Zn(2+)</name>
        <dbReference type="ChEBI" id="CHEBI:29105"/>
    </cofactor>
    <cofactor evidence="1">
        <name>Co(2+)</name>
        <dbReference type="ChEBI" id="CHEBI:48828"/>
    </cofactor>
    <text evidence="1">Binds 2 Zn(2+) or Co(2+) ions per subunit.</text>
</comment>
<comment type="pathway">
    <text evidence="1">Amino-acid biosynthesis; L-lysine biosynthesis via DAP pathway; LL-2,6-diaminopimelate from (S)-tetrahydrodipicolinate (succinylase route): step 3/3.</text>
</comment>
<comment type="subunit">
    <text evidence="1">Homodimer.</text>
</comment>
<comment type="similarity">
    <text evidence="1">Belongs to the peptidase M20A family. DapE subfamily.</text>
</comment>
<gene>
    <name evidence="1" type="primary">dapE</name>
    <name type="ordered locus">UTI89_C2798</name>
</gene>
<protein>
    <recommendedName>
        <fullName evidence="1">Succinyl-diaminopimelate desuccinylase</fullName>
        <shortName evidence="1">SDAP desuccinylase</shortName>
        <ecNumber evidence="1">3.5.1.18</ecNumber>
    </recommendedName>
    <alternativeName>
        <fullName evidence="1">N-succinyl-LL-2,6-diaminoheptanedioate amidohydrolase</fullName>
    </alternativeName>
</protein>
<reference key="1">
    <citation type="journal article" date="2006" name="Proc. Natl. Acad. Sci. U.S.A.">
        <title>Identification of genes subject to positive selection in uropathogenic strains of Escherichia coli: a comparative genomics approach.</title>
        <authorList>
            <person name="Chen S.L."/>
            <person name="Hung C.-S."/>
            <person name="Xu J."/>
            <person name="Reigstad C.S."/>
            <person name="Magrini V."/>
            <person name="Sabo A."/>
            <person name="Blasiar D."/>
            <person name="Bieri T."/>
            <person name="Meyer R.R."/>
            <person name="Ozersky P."/>
            <person name="Armstrong J.R."/>
            <person name="Fulton R.S."/>
            <person name="Latreille J.P."/>
            <person name="Spieth J."/>
            <person name="Hooton T.M."/>
            <person name="Mardis E.R."/>
            <person name="Hultgren S.J."/>
            <person name="Gordon J.I."/>
        </authorList>
    </citation>
    <scope>NUCLEOTIDE SEQUENCE [LARGE SCALE GENOMIC DNA]</scope>
    <source>
        <strain>UTI89 / UPEC</strain>
    </source>
</reference>
<keyword id="KW-0028">Amino-acid biosynthesis</keyword>
<keyword id="KW-0170">Cobalt</keyword>
<keyword id="KW-0220">Diaminopimelate biosynthesis</keyword>
<keyword id="KW-0378">Hydrolase</keyword>
<keyword id="KW-0457">Lysine biosynthesis</keyword>
<keyword id="KW-0479">Metal-binding</keyword>
<keyword id="KW-0862">Zinc</keyword>
<dbReference type="EC" id="3.5.1.18" evidence="1"/>
<dbReference type="EMBL" id="CP000243">
    <property type="protein sequence ID" value="ABE08258.1"/>
    <property type="molecule type" value="Genomic_DNA"/>
</dbReference>
<dbReference type="RefSeq" id="WP_001277797.1">
    <property type="nucleotide sequence ID" value="NZ_CP064825.1"/>
</dbReference>
<dbReference type="SMR" id="Q1R8Q6"/>
<dbReference type="MEROPS" id="M20.010"/>
<dbReference type="KEGG" id="eci:UTI89_C2798"/>
<dbReference type="HOGENOM" id="CLU_021802_4_0_6"/>
<dbReference type="UniPathway" id="UPA00034">
    <property type="reaction ID" value="UER00021"/>
</dbReference>
<dbReference type="Proteomes" id="UP000001952">
    <property type="component" value="Chromosome"/>
</dbReference>
<dbReference type="GO" id="GO:0008777">
    <property type="term" value="F:acetylornithine deacetylase activity"/>
    <property type="evidence" value="ECO:0007669"/>
    <property type="project" value="TreeGrafter"/>
</dbReference>
<dbReference type="GO" id="GO:0050897">
    <property type="term" value="F:cobalt ion binding"/>
    <property type="evidence" value="ECO:0007669"/>
    <property type="project" value="UniProtKB-UniRule"/>
</dbReference>
<dbReference type="GO" id="GO:0009014">
    <property type="term" value="F:succinyl-diaminopimelate desuccinylase activity"/>
    <property type="evidence" value="ECO:0007669"/>
    <property type="project" value="UniProtKB-UniRule"/>
</dbReference>
<dbReference type="GO" id="GO:0008270">
    <property type="term" value="F:zinc ion binding"/>
    <property type="evidence" value="ECO:0007669"/>
    <property type="project" value="UniProtKB-UniRule"/>
</dbReference>
<dbReference type="GO" id="GO:0019877">
    <property type="term" value="P:diaminopimelate biosynthetic process"/>
    <property type="evidence" value="ECO:0007669"/>
    <property type="project" value="UniProtKB-UniRule"/>
</dbReference>
<dbReference type="GO" id="GO:0006526">
    <property type="term" value="P:L-arginine biosynthetic process"/>
    <property type="evidence" value="ECO:0007669"/>
    <property type="project" value="TreeGrafter"/>
</dbReference>
<dbReference type="GO" id="GO:0009089">
    <property type="term" value="P:lysine biosynthetic process via diaminopimelate"/>
    <property type="evidence" value="ECO:0007669"/>
    <property type="project" value="UniProtKB-UniRule"/>
</dbReference>
<dbReference type="CDD" id="cd03891">
    <property type="entry name" value="M20_DapE_proteobac"/>
    <property type="match status" value="1"/>
</dbReference>
<dbReference type="FunFam" id="3.30.70.360:FF:000011">
    <property type="entry name" value="Succinyl-diaminopimelate desuccinylase"/>
    <property type="match status" value="1"/>
</dbReference>
<dbReference type="FunFam" id="3.40.630.10:FF:000005">
    <property type="entry name" value="Succinyl-diaminopimelate desuccinylase"/>
    <property type="match status" value="1"/>
</dbReference>
<dbReference type="FunFam" id="3.40.630.10:FF:000010">
    <property type="entry name" value="Succinyl-diaminopimelate desuccinylase"/>
    <property type="match status" value="1"/>
</dbReference>
<dbReference type="Gene3D" id="3.40.630.10">
    <property type="entry name" value="Zn peptidases"/>
    <property type="match status" value="2"/>
</dbReference>
<dbReference type="HAMAP" id="MF_01690">
    <property type="entry name" value="DapE"/>
    <property type="match status" value="1"/>
</dbReference>
<dbReference type="InterPro" id="IPR001261">
    <property type="entry name" value="ArgE/DapE_CS"/>
</dbReference>
<dbReference type="InterPro" id="IPR036264">
    <property type="entry name" value="Bact_exopeptidase_dim_dom"/>
</dbReference>
<dbReference type="InterPro" id="IPR005941">
    <property type="entry name" value="DapE_proteobac"/>
</dbReference>
<dbReference type="InterPro" id="IPR002933">
    <property type="entry name" value="Peptidase_M20"/>
</dbReference>
<dbReference type="InterPro" id="IPR011650">
    <property type="entry name" value="Peptidase_M20_dimer"/>
</dbReference>
<dbReference type="InterPro" id="IPR050072">
    <property type="entry name" value="Peptidase_M20A"/>
</dbReference>
<dbReference type="NCBIfam" id="TIGR01246">
    <property type="entry name" value="dapE_proteo"/>
    <property type="match status" value="1"/>
</dbReference>
<dbReference type="NCBIfam" id="NF009557">
    <property type="entry name" value="PRK13009.1"/>
    <property type="match status" value="1"/>
</dbReference>
<dbReference type="PANTHER" id="PTHR43808">
    <property type="entry name" value="ACETYLORNITHINE DEACETYLASE"/>
    <property type="match status" value="1"/>
</dbReference>
<dbReference type="PANTHER" id="PTHR43808:SF31">
    <property type="entry name" value="N-ACETYL-L-CITRULLINE DEACETYLASE"/>
    <property type="match status" value="1"/>
</dbReference>
<dbReference type="Pfam" id="PF07687">
    <property type="entry name" value="M20_dimer"/>
    <property type="match status" value="1"/>
</dbReference>
<dbReference type="Pfam" id="PF01546">
    <property type="entry name" value="Peptidase_M20"/>
    <property type="match status" value="1"/>
</dbReference>
<dbReference type="SUPFAM" id="SSF55031">
    <property type="entry name" value="Bacterial exopeptidase dimerisation domain"/>
    <property type="match status" value="1"/>
</dbReference>
<dbReference type="SUPFAM" id="SSF53187">
    <property type="entry name" value="Zn-dependent exopeptidases"/>
    <property type="match status" value="1"/>
</dbReference>
<dbReference type="PROSITE" id="PS00758">
    <property type="entry name" value="ARGE_DAPE_CPG2_1"/>
    <property type="match status" value="1"/>
</dbReference>
<dbReference type="PROSITE" id="PS00759">
    <property type="entry name" value="ARGE_DAPE_CPG2_2"/>
    <property type="match status" value="1"/>
</dbReference>
<accession>Q1R8Q6</accession>
<organism>
    <name type="scientific">Escherichia coli (strain UTI89 / UPEC)</name>
    <dbReference type="NCBI Taxonomy" id="364106"/>
    <lineage>
        <taxon>Bacteria</taxon>
        <taxon>Pseudomonadati</taxon>
        <taxon>Pseudomonadota</taxon>
        <taxon>Gammaproteobacteria</taxon>
        <taxon>Enterobacterales</taxon>
        <taxon>Enterobacteriaceae</taxon>
        <taxon>Escherichia</taxon>
    </lineage>
</organism>
<evidence type="ECO:0000255" key="1">
    <source>
        <dbReference type="HAMAP-Rule" id="MF_01690"/>
    </source>
</evidence>
<feature type="chain" id="PRO_0000375558" description="Succinyl-diaminopimelate desuccinylase">
    <location>
        <begin position="1"/>
        <end position="375"/>
    </location>
</feature>
<feature type="active site" evidence="1">
    <location>
        <position position="68"/>
    </location>
</feature>
<feature type="active site" description="Proton acceptor" evidence="1">
    <location>
        <position position="133"/>
    </location>
</feature>
<feature type="binding site" evidence="1">
    <location>
        <position position="66"/>
    </location>
    <ligand>
        <name>Zn(2+)</name>
        <dbReference type="ChEBI" id="CHEBI:29105"/>
        <label>1</label>
    </ligand>
</feature>
<feature type="binding site" evidence="1">
    <location>
        <position position="99"/>
    </location>
    <ligand>
        <name>Zn(2+)</name>
        <dbReference type="ChEBI" id="CHEBI:29105"/>
        <label>1</label>
    </ligand>
</feature>
<feature type="binding site" evidence="1">
    <location>
        <position position="99"/>
    </location>
    <ligand>
        <name>Zn(2+)</name>
        <dbReference type="ChEBI" id="CHEBI:29105"/>
        <label>2</label>
    </ligand>
</feature>
<feature type="binding site" evidence="1">
    <location>
        <position position="134"/>
    </location>
    <ligand>
        <name>Zn(2+)</name>
        <dbReference type="ChEBI" id="CHEBI:29105"/>
        <label>2</label>
    </ligand>
</feature>
<feature type="binding site" evidence="1">
    <location>
        <position position="162"/>
    </location>
    <ligand>
        <name>Zn(2+)</name>
        <dbReference type="ChEBI" id="CHEBI:29105"/>
        <label>1</label>
    </ligand>
</feature>
<feature type="binding site" evidence="1">
    <location>
        <position position="348"/>
    </location>
    <ligand>
        <name>Zn(2+)</name>
        <dbReference type="ChEBI" id="CHEBI:29105"/>
        <label>2</label>
    </ligand>
</feature>
<proteinExistence type="inferred from homology"/>
<name>DAPE_ECOUT</name>
<sequence>MSCPVIELTQQLIRRPSLSPDDAGCQALLIERLQAIGFTVERMDFADTQNFWAWRGQGETLAFAGHTDVVPPGDADRWINPPFEPTIRDGMLFGRGAADMKGSLAAMVVAAERFVAQHPNHTGRLAFLITSDEEASAHNGTVKVVEALMARNERLDYCLVGEPSSIEVVGDVVKNGRRGSLTCNLTIHGVQGHVAYPHLADNPVHRAAPFINELVAIEWDQGNEFFPATSMQIANIQAGTGSNNVIPGELFVQFNFRFSTELTDEMIKAQVLALLEKHQLRYTVDWWLSGQPFLTARGKLVDAVVNAVEHYNEIKPQLLTTGGTSDGRFIARMGAQVVELGPVNATIHKINECVNAADLQLLARMYQRIMEQLVA</sequence>